<evidence type="ECO:0000255" key="1">
    <source>
        <dbReference type="HAMAP-Rule" id="MF_00226"/>
    </source>
</evidence>
<gene>
    <name type="ordered locus">AnaeK_3683</name>
</gene>
<comment type="similarity">
    <text evidence="1">Belongs to the CinA family.</text>
</comment>
<reference key="1">
    <citation type="submission" date="2008-08" db="EMBL/GenBank/DDBJ databases">
        <title>Complete sequence of Anaeromyxobacter sp. K.</title>
        <authorList>
            <consortium name="US DOE Joint Genome Institute"/>
            <person name="Lucas S."/>
            <person name="Copeland A."/>
            <person name="Lapidus A."/>
            <person name="Glavina del Rio T."/>
            <person name="Dalin E."/>
            <person name="Tice H."/>
            <person name="Bruce D."/>
            <person name="Goodwin L."/>
            <person name="Pitluck S."/>
            <person name="Saunders E."/>
            <person name="Brettin T."/>
            <person name="Detter J.C."/>
            <person name="Han C."/>
            <person name="Larimer F."/>
            <person name="Land M."/>
            <person name="Hauser L."/>
            <person name="Kyrpides N."/>
            <person name="Ovchinnikiva G."/>
            <person name="Beliaev A."/>
        </authorList>
    </citation>
    <scope>NUCLEOTIDE SEQUENCE [LARGE SCALE GENOMIC DNA]</scope>
    <source>
        <strain>K</strain>
    </source>
</reference>
<protein>
    <recommendedName>
        <fullName evidence="1">CinA-like protein</fullName>
    </recommendedName>
</protein>
<proteinExistence type="inferred from homology"/>
<name>CINAL_ANASK</name>
<dbReference type="EMBL" id="CP001131">
    <property type="protein sequence ID" value="ACG74895.1"/>
    <property type="molecule type" value="Genomic_DNA"/>
</dbReference>
<dbReference type="RefSeq" id="WP_012527662.1">
    <property type="nucleotide sequence ID" value="NC_011145.1"/>
</dbReference>
<dbReference type="SMR" id="B4UD97"/>
<dbReference type="KEGG" id="ank:AnaeK_3683"/>
<dbReference type="HOGENOM" id="CLU_030805_9_2_7"/>
<dbReference type="OrthoDB" id="9801454at2"/>
<dbReference type="Proteomes" id="UP000001871">
    <property type="component" value="Chromosome"/>
</dbReference>
<dbReference type="CDD" id="cd00885">
    <property type="entry name" value="cinA"/>
    <property type="match status" value="1"/>
</dbReference>
<dbReference type="Gene3D" id="3.90.950.20">
    <property type="entry name" value="CinA-like"/>
    <property type="match status" value="1"/>
</dbReference>
<dbReference type="Gene3D" id="3.40.980.10">
    <property type="entry name" value="MoaB/Mog-like domain"/>
    <property type="match status" value="1"/>
</dbReference>
<dbReference type="HAMAP" id="MF_00226_B">
    <property type="entry name" value="CinA_B"/>
    <property type="match status" value="1"/>
</dbReference>
<dbReference type="InterPro" id="IPR050101">
    <property type="entry name" value="CinA"/>
</dbReference>
<dbReference type="InterPro" id="IPR036653">
    <property type="entry name" value="CinA-like_C"/>
</dbReference>
<dbReference type="InterPro" id="IPR008136">
    <property type="entry name" value="CinA_C"/>
</dbReference>
<dbReference type="InterPro" id="IPR008135">
    <property type="entry name" value="Competence-induced_CinA"/>
</dbReference>
<dbReference type="InterPro" id="IPR036425">
    <property type="entry name" value="MoaB/Mog-like_dom_sf"/>
</dbReference>
<dbReference type="InterPro" id="IPR001453">
    <property type="entry name" value="MoaB/Mog_dom"/>
</dbReference>
<dbReference type="NCBIfam" id="TIGR00200">
    <property type="entry name" value="cinA_nterm"/>
    <property type="match status" value="1"/>
</dbReference>
<dbReference type="NCBIfam" id="TIGR00177">
    <property type="entry name" value="molyb_syn"/>
    <property type="match status" value="1"/>
</dbReference>
<dbReference type="NCBIfam" id="TIGR00199">
    <property type="entry name" value="PncC_domain"/>
    <property type="match status" value="1"/>
</dbReference>
<dbReference type="PANTHER" id="PTHR13939">
    <property type="entry name" value="NICOTINAMIDE-NUCLEOTIDE AMIDOHYDROLASE PNCC"/>
    <property type="match status" value="1"/>
</dbReference>
<dbReference type="PANTHER" id="PTHR13939:SF0">
    <property type="entry name" value="NMN AMIDOHYDROLASE-LIKE PROTEIN YFAY"/>
    <property type="match status" value="1"/>
</dbReference>
<dbReference type="Pfam" id="PF02464">
    <property type="entry name" value="CinA"/>
    <property type="match status" value="1"/>
</dbReference>
<dbReference type="Pfam" id="PF00994">
    <property type="entry name" value="MoCF_biosynth"/>
    <property type="match status" value="1"/>
</dbReference>
<dbReference type="PIRSF" id="PIRSF006728">
    <property type="entry name" value="CinA"/>
    <property type="match status" value="1"/>
</dbReference>
<dbReference type="SMART" id="SM00852">
    <property type="entry name" value="MoCF_biosynth"/>
    <property type="match status" value="1"/>
</dbReference>
<dbReference type="SUPFAM" id="SSF142433">
    <property type="entry name" value="CinA-like"/>
    <property type="match status" value="1"/>
</dbReference>
<dbReference type="SUPFAM" id="SSF53218">
    <property type="entry name" value="Molybdenum cofactor biosynthesis proteins"/>
    <property type="match status" value="1"/>
</dbReference>
<accession>B4UD97</accession>
<feature type="chain" id="PRO_1000100305" description="CinA-like protein">
    <location>
        <begin position="1"/>
        <end position="408"/>
    </location>
</feature>
<organism>
    <name type="scientific">Anaeromyxobacter sp. (strain K)</name>
    <dbReference type="NCBI Taxonomy" id="447217"/>
    <lineage>
        <taxon>Bacteria</taxon>
        <taxon>Pseudomonadati</taxon>
        <taxon>Myxococcota</taxon>
        <taxon>Myxococcia</taxon>
        <taxon>Myxococcales</taxon>
        <taxon>Cystobacterineae</taxon>
        <taxon>Anaeromyxobacteraceae</taxon>
        <taxon>Anaeromyxobacter</taxon>
    </lineage>
</organism>
<sequence length="408" mass="43345">MQVEILATGDELLTGQVVDTNSPWLMDRLWDLGLMVRRKTLVADDRDDLRASILETTARADLVVMSGGMGPTEDDLTSECVAAVLGVPLERHEPSIEVLRERFRKFGRALTPNNEKQAWFPRGAEVIPNRWGSAPGFTVPVGRGRVVCLPGVPVEYRGLCEEWVLPHVGARLGEVPAAGLVKLFAVPESHADHAMRPVMDDPANAGVRFGYRAHWPETHVKWTVPGPGAAARAARIRERVLGIFGEQVFGEGKDELPELVVARLAARGERVALGESCTGGMVAELLTAVPGASAVLDLGVVAYANAAKERVLGVPAELLAAHGAVSEPVARALAEGARRTGGAAWGVGITGIAGPSGGTPEKPVGTVHLAVAGPSGTEAVARAYRGDRDRVRRQAAYEALNLLRLALR</sequence>